<feature type="chain" id="PRO_0000243064" description="Large ribosomal subunit protein uL5">
    <location>
        <begin position="1"/>
        <end position="179"/>
    </location>
</feature>
<feature type="modified residue" description="N6-acetyllysine" evidence="1">
    <location>
        <position position="3"/>
    </location>
</feature>
<organism>
    <name type="scientific">Shigella sonnei (strain Ss046)</name>
    <dbReference type="NCBI Taxonomy" id="300269"/>
    <lineage>
        <taxon>Bacteria</taxon>
        <taxon>Pseudomonadati</taxon>
        <taxon>Pseudomonadota</taxon>
        <taxon>Gammaproteobacteria</taxon>
        <taxon>Enterobacterales</taxon>
        <taxon>Enterobacteriaceae</taxon>
        <taxon>Shigella</taxon>
    </lineage>
</organism>
<reference key="1">
    <citation type="journal article" date="2005" name="Nucleic Acids Res.">
        <title>Genome dynamics and diversity of Shigella species, the etiologic agents of bacillary dysentery.</title>
        <authorList>
            <person name="Yang F."/>
            <person name="Yang J."/>
            <person name="Zhang X."/>
            <person name="Chen L."/>
            <person name="Jiang Y."/>
            <person name="Yan Y."/>
            <person name="Tang X."/>
            <person name="Wang J."/>
            <person name="Xiong Z."/>
            <person name="Dong J."/>
            <person name="Xue Y."/>
            <person name="Zhu Y."/>
            <person name="Xu X."/>
            <person name="Sun L."/>
            <person name="Chen S."/>
            <person name="Nie H."/>
            <person name="Peng J."/>
            <person name="Xu J."/>
            <person name="Wang Y."/>
            <person name="Yuan Z."/>
            <person name="Wen Y."/>
            <person name="Yao Z."/>
            <person name="Shen Y."/>
            <person name="Qiang B."/>
            <person name="Hou Y."/>
            <person name="Yu J."/>
            <person name="Jin Q."/>
        </authorList>
    </citation>
    <scope>NUCLEOTIDE SEQUENCE [LARGE SCALE GENOMIC DNA]</scope>
    <source>
        <strain>Ss046</strain>
    </source>
</reference>
<sequence length="179" mass="20302">MAKLHDYYKDEVVKKLMTEFNYNSVMQVPRVEKITLNMGVGEAIADKKLLDNAAADLAAISGQKPLITKARKSVAGFKIRQGYPIGCKVTLRGERMWEFFERLITIAVPRIRDFRGLSAKSFDGRGNYSMGVREQIIFPEIDYDKVDRVRGLDITITTTAKSDEEGRALLAAFDFPFRK</sequence>
<evidence type="ECO:0000255" key="1">
    <source>
        <dbReference type="HAMAP-Rule" id="MF_01333"/>
    </source>
</evidence>
<evidence type="ECO:0000305" key="2"/>
<name>RL5_SHISS</name>
<proteinExistence type="inferred from homology"/>
<keyword id="KW-0007">Acetylation</keyword>
<keyword id="KW-1185">Reference proteome</keyword>
<keyword id="KW-0687">Ribonucleoprotein</keyword>
<keyword id="KW-0689">Ribosomal protein</keyword>
<keyword id="KW-0694">RNA-binding</keyword>
<keyword id="KW-0699">rRNA-binding</keyword>
<keyword id="KW-0820">tRNA-binding</keyword>
<gene>
    <name evidence="1" type="primary">rplE</name>
    <name type="ordered locus">SSON_3449</name>
</gene>
<comment type="function">
    <text evidence="1">This is one of the proteins that bind and probably mediate the attachment of the 5S RNA into the large ribosomal subunit, where it forms part of the central protuberance. In the 70S ribosome it contacts protein S13 of the 30S subunit (bridge B1b), connecting the 2 subunits; this bridge is implicated in subunit movement. Contacts the P site tRNA; the 5S rRNA and some of its associated proteins might help stabilize positioning of ribosome-bound tRNAs.</text>
</comment>
<comment type="subunit">
    <text evidence="1">Part of the 50S ribosomal subunit; part of the 5S rRNA/L5/L18/L25 subcomplex. Contacts the 5S rRNA and the P site tRNA. Forms a bridge to the 30S subunit in the 70S ribosome.</text>
</comment>
<comment type="similarity">
    <text evidence="1">Belongs to the universal ribosomal protein uL5 family.</text>
</comment>
<accession>Q3YWV1</accession>
<protein>
    <recommendedName>
        <fullName evidence="1">Large ribosomal subunit protein uL5</fullName>
    </recommendedName>
    <alternativeName>
        <fullName evidence="2">50S ribosomal protein L5</fullName>
    </alternativeName>
</protein>
<dbReference type="EMBL" id="CP000038">
    <property type="protein sequence ID" value="AAZ90011.1"/>
    <property type="molecule type" value="Genomic_DNA"/>
</dbReference>
<dbReference type="RefSeq" id="WP_001096200.1">
    <property type="nucleotide sequence ID" value="NC_007384.1"/>
</dbReference>
<dbReference type="SMR" id="Q3YWV1"/>
<dbReference type="GeneID" id="93778679"/>
<dbReference type="KEGG" id="ssn:SSON_3449"/>
<dbReference type="HOGENOM" id="CLU_061015_2_1_6"/>
<dbReference type="Proteomes" id="UP000002529">
    <property type="component" value="Chromosome"/>
</dbReference>
<dbReference type="GO" id="GO:1990904">
    <property type="term" value="C:ribonucleoprotein complex"/>
    <property type="evidence" value="ECO:0007669"/>
    <property type="project" value="UniProtKB-KW"/>
</dbReference>
<dbReference type="GO" id="GO:0005840">
    <property type="term" value="C:ribosome"/>
    <property type="evidence" value="ECO:0007669"/>
    <property type="project" value="UniProtKB-KW"/>
</dbReference>
<dbReference type="GO" id="GO:0019843">
    <property type="term" value="F:rRNA binding"/>
    <property type="evidence" value="ECO:0007669"/>
    <property type="project" value="UniProtKB-UniRule"/>
</dbReference>
<dbReference type="GO" id="GO:0003735">
    <property type="term" value="F:structural constituent of ribosome"/>
    <property type="evidence" value="ECO:0007669"/>
    <property type="project" value="InterPro"/>
</dbReference>
<dbReference type="GO" id="GO:0000049">
    <property type="term" value="F:tRNA binding"/>
    <property type="evidence" value="ECO:0007669"/>
    <property type="project" value="UniProtKB-UniRule"/>
</dbReference>
<dbReference type="GO" id="GO:0006412">
    <property type="term" value="P:translation"/>
    <property type="evidence" value="ECO:0007669"/>
    <property type="project" value="UniProtKB-UniRule"/>
</dbReference>
<dbReference type="FunFam" id="3.30.1440.10:FF:000001">
    <property type="entry name" value="50S ribosomal protein L5"/>
    <property type="match status" value="1"/>
</dbReference>
<dbReference type="Gene3D" id="3.30.1440.10">
    <property type="match status" value="1"/>
</dbReference>
<dbReference type="HAMAP" id="MF_01333_B">
    <property type="entry name" value="Ribosomal_uL5_B"/>
    <property type="match status" value="1"/>
</dbReference>
<dbReference type="InterPro" id="IPR002132">
    <property type="entry name" value="Ribosomal_uL5"/>
</dbReference>
<dbReference type="InterPro" id="IPR020930">
    <property type="entry name" value="Ribosomal_uL5_bac-type"/>
</dbReference>
<dbReference type="InterPro" id="IPR031309">
    <property type="entry name" value="Ribosomal_uL5_C"/>
</dbReference>
<dbReference type="InterPro" id="IPR020929">
    <property type="entry name" value="Ribosomal_uL5_CS"/>
</dbReference>
<dbReference type="InterPro" id="IPR022803">
    <property type="entry name" value="Ribosomal_uL5_dom_sf"/>
</dbReference>
<dbReference type="InterPro" id="IPR031310">
    <property type="entry name" value="Ribosomal_uL5_N"/>
</dbReference>
<dbReference type="NCBIfam" id="NF000585">
    <property type="entry name" value="PRK00010.1"/>
    <property type="match status" value="1"/>
</dbReference>
<dbReference type="PANTHER" id="PTHR11994">
    <property type="entry name" value="60S RIBOSOMAL PROTEIN L11-RELATED"/>
    <property type="match status" value="1"/>
</dbReference>
<dbReference type="Pfam" id="PF00281">
    <property type="entry name" value="Ribosomal_L5"/>
    <property type="match status" value="1"/>
</dbReference>
<dbReference type="Pfam" id="PF00673">
    <property type="entry name" value="Ribosomal_L5_C"/>
    <property type="match status" value="1"/>
</dbReference>
<dbReference type="PIRSF" id="PIRSF002161">
    <property type="entry name" value="Ribosomal_L5"/>
    <property type="match status" value="1"/>
</dbReference>
<dbReference type="SUPFAM" id="SSF55282">
    <property type="entry name" value="RL5-like"/>
    <property type="match status" value="1"/>
</dbReference>
<dbReference type="PROSITE" id="PS00358">
    <property type="entry name" value="RIBOSOMAL_L5"/>
    <property type="match status" value="1"/>
</dbReference>